<accession>C0HKP8</accession>
<organism evidence="3">
    <name type="scientific">Pithecopus nordestinus</name>
    <name type="common">Northeastern Brazilian leaf frog</name>
    <name type="synonym">Phyllomedusa nordestina</name>
    <dbReference type="NCBI Taxonomy" id="2034992"/>
    <lineage>
        <taxon>Eukaryota</taxon>
        <taxon>Metazoa</taxon>
        <taxon>Chordata</taxon>
        <taxon>Craniata</taxon>
        <taxon>Vertebrata</taxon>
        <taxon>Euteleostomi</taxon>
        <taxon>Amphibia</taxon>
        <taxon>Batrachia</taxon>
        <taxon>Anura</taxon>
        <taxon>Neobatrachia</taxon>
        <taxon>Hyloidea</taxon>
        <taxon>Hylidae</taxon>
        <taxon>Phyllomedusinae</taxon>
        <taxon>Pithecopus</taxon>
    </lineage>
</organism>
<name>DMS4_PITNO</name>
<dbReference type="SMR" id="C0HKP8"/>
<dbReference type="GO" id="GO:0005576">
    <property type="term" value="C:extracellular region"/>
    <property type="evidence" value="ECO:0007669"/>
    <property type="project" value="UniProtKB-SubCell"/>
</dbReference>
<dbReference type="GO" id="GO:0042742">
    <property type="term" value="P:defense response to bacterium"/>
    <property type="evidence" value="ECO:0007669"/>
    <property type="project" value="UniProtKB-KW"/>
</dbReference>
<proteinExistence type="evidence at protein level"/>
<comment type="function">
    <text evidence="1 2">Has antiparasitic activity against trypomastigote form of T.cruzi (IC(50)=0.25 uM) in vitro but not against L.infantum (PubMed:24113627). Probably acts by permeabilizing cell membranes (PubMed:24113627). In vitro, shows no cytotoxicity against macrophages (PubMed:24113627). Has antibacterial activity (By similarity).</text>
</comment>
<comment type="subcellular location">
    <subcellularLocation>
        <location evidence="2">Secreted</location>
    </subcellularLocation>
</comment>
<comment type="tissue specificity">
    <text evidence="5">Expressed by the skin glands.</text>
</comment>
<comment type="mass spectrometry"/>
<comment type="similarity">
    <text evidence="4">Belongs to the frog skin active peptide (FSAP) family. Dermaseptin subfamily.</text>
</comment>
<evidence type="ECO:0000250" key="1">
    <source>
        <dbReference type="UniProtKB" id="P83637"/>
    </source>
</evidence>
<evidence type="ECO:0000269" key="2">
    <source>
    </source>
</evidence>
<evidence type="ECO:0000303" key="3">
    <source>
    </source>
</evidence>
<evidence type="ECO:0000305" key="4"/>
<evidence type="ECO:0000305" key="5">
    <source>
    </source>
</evidence>
<sequence>GLWSTIKQKGKEAAIAAAKAAGKAALNAASEAL</sequence>
<reference evidence="4" key="1">
    <citation type="journal article" date="2013" name="Exp. Parasitol.">
        <title>Antimicrobial peptides isolated from Phyllomedusa nordestina (Amphibia) alter the permeability of plasma membrane of Leishmania and Trypanosoma cruzi.</title>
        <authorList>
            <person name="Pinto E.G."/>
            <person name="Pimenta D.C."/>
            <person name="Antoniazzi M.M."/>
            <person name="Jared C."/>
            <person name="Tempone A.G."/>
        </authorList>
    </citation>
    <scope>PROTEIN SEQUENCE</scope>
    <scope>FUNCTION</scope>
    <scope>SUBCELLULAR LOCATION</scope>
    <scope>MASS SPECTROMETRY</scope>
    <scope>AMIDATION AT LEU-33</scope>
    <source>
        <tissue evidence="3">Skin secretion</tissue>
    </source>
</reference>
<keyword id="KW-0027">Amidation</keyword>
<keyword id="KW-0878">Amphibian defense peptide</keyword>
<keyword id="KW-0044">Antibiotic</keyword>
<keyword id="KW-0929">Antimicrobial</keyword>
<keyword id="KW-0903">Direct protein sequencing</keyword>
<keyword id="KW-0964">Secreted</keyword>
<protein>
    <recommendedName>
        <fullName evidence="3">Dermaseptin-4</fullName>
    </recommendedName>
</protein>
<feature type="peptide" id="PRO_0000441007" description="Dermaseptin-4" evidence="2">
    <location>
        <begin position="1"/>
        <end position="33"/>
    </location>
</feature>
<feature type="modified residue" description="Leucine amide" evidence="2">
    <location>
        <position position="33"/>
    </location>
</feature>